<feature type="chain" id="PRO_0000324940" description="Leucine aminopeptidase 2">
    <location>
        <begin position="1"/>
        <end position="608"/>
    </location>
</feature>
<feature type="active site" description="Proton acceptor" evidence="3">
    <location>
        <position position="299"/>
    </location>
</feature>
<feature type="active site" description="Proton donor" evidence="3">
    <location>
        <position position="386"/>
    </location>
</feature>
<feature type="binding site" evidence="1">
    <location>
        <begin position="134"/>
        <end position="136"/>
    </location>
    <ligand>
        <name>substrate</name>
    </ligand>
</feature>
<feature type="binding site" evidence="1">
    <location>
        <begin position="269"/>
        <end position="274"/>
    </location>
    <ligand>
        <name>substrate</name>
    </ligand>
</feature>
<feature type="binding site" evidence="3">
    <location>
        <position position="298"/>
    </location>
    <ligand>
        <name>Zn(2+)</name>
        <dbReference type="ChEBI" id="CHEBI:29105"/>
        <note>catalytic</note>
    </ligand>
</feature>
<feature type="binding site" evidence="3">
    <location>
        <position position="302"/>
    </location>
    <ligand>
        <name>Zn(2+)</name>
        <dbReference type="ChEBI" id="CHEBI:29105"/>
        <note>catalytic</note>
    </ligand>
</feature>
<feature type="binding site" evidence="3">
    <location>
        <position position="321"/>
    </location>
    <ligand>
        <name>Zn(2+)</name>
        <dbReference type="ChEBI" id="CHEBI:29105"/>
        <note>catalytic</note>
    </ligand>
</feature>
<gene>
    <name type="ORF">SS1G_05513</name>
</gene>
<dbReference type="EC" id="3.4.11.-"/>
<dbReference type="EC" id="3.3.2.10"/>
<dbReference type="EMBL" id="CH476626">
    <property type="protein sequence ID" value="EDO03035.1"/>
    <property type="molecule type" value="Genomic_DNA"/>
</dbReference>
<dbReference type="RefSeq" id="XP_001594084.1">
    <property type="nucleotide sequence ID" value="XM_001594034.1"/>
</dbReference>
<dbReference type="SMR" id="A7EJL9"/>
<dbReference type="FunCoup" id="A7EJL9">
    <property type="interactions" value="981"/>
</dbReference>
<dbReference type="STRING" id="665079.A7EJL9"/>
<dbReference type="MEROPS" id="M01.034"/>
<dbReference type="EnsemblFungi" id="EDO03035">
    <property type="protein sequence ID" value="EDO03035"/>
    <property type="gene ID" value="SS1G_05513"/>
</dbReference>
<dbReference type="GeneID" id="5490085"/>
<dbReference type="KEGG" id="ssl:SS1G_05513"/>
<dbReference type="VEuPathDB" id="FungiDB:sscle_08g067260"/>
<dbReference type="eggNOG" id="KOG1047">
    <property type="taxonomic scope" value="Eukaryota"/>
</dbReference>
<dbReference type="HOGENOM" id="CLU_014505_1_1_1"/>
<dbReference type="InParanoid" id="A7EJL9"/>
<dbReference type="OMA" id="CTALQWM"/>
<dbReference type="OrthoDB" id="79562at2759"/>
<dbReference type="Proteomes" id="UP000001312">
    <property type="component" value="Unassembled WGS sequence"/>
</dbReference>
<dbReference type="GO" id="GO:0005829">
    <property type="term" value="C:cytosol"/>
    <property type="evidence" value="ECO:0000318"/>
    <property type="project" value="GO_Central"/>
</dbReference>
<dbReference type="GO" id="GO:0000328">
    <property type="term" value="C:fungal-type vacuole lumen"/>
    <property type="evidence" value="ECO:0007669"/>
    <property type="project" value="EnsemblFungi"/>
</dbReference>
<dbReference type="GO" id="GO:0005771">
    <property type="term" value="C:multivesicular body"/>
    <property type="evidence" value="ECO:0007669"/>
    <property type="project" value="EnsemblFungi"/>
</dbReference>
<dbReference type="GO" id="GO:0005634">
    <property type="term" value="C:nucleus"/>
    <property type="evidence" value="ECO:0007669"/>
    <property type="project" value="UniProtKB-SubCell"/>
</dbReference>
<dbReference type="GO" id="GO:0061957">
    <property type="term" value="C:NVT complex"/>
    <property type="evidence" value="ECO:0007669"/>
    <property type="project" value="EnsemblFungi"/>
</dbReference>
<dbReference type="GO" id="GO:0004177">
    <property type="term" value="F:aminopeptidase activity"/>
    <property type="evidence" value="ECO:0000250"/>
    <property type="project" value="UniProtKB"/>
</dbReference>
<dbReference type="GO" id="GO:0004301">
    <property type="term" value="F:epoxide hydrolase activity"/>
    <property type="evidence" value="ECO:0000250"/>
    <property type="project" value="UniProtKB"/>
</dbReference>
<dbReference type="GO" id="GO:0008237">
    <property type="term" value="F:metallopeptidase activity"/>
    <property type="evidence" value="ECO:0007669"/>
    <property type="project" value="UniProtKB-KW"/>
</dbReference>
<dbReference type="GO" id="GO:0008270">
    <property type="term" value="F:zinc ion binding"/>
    <property type="evidence" value="ECO:0000250"/>
    <property type="project" value="UniProtKB"/>
</dbReference>
<dbReference type="GO" id="GO:0120113">
    <property type="term" value="P:cytoplasm to vacuole targeting by the NVT pathway"/>
    <property type="evidence" value="ECO:0007669"/>
    <property type="project" value="EnsemblFungi"/>
</dbReference>
<dbReference type="GO" id="GO:0006629">
    <property type="term" value="P:lipid metabolic process"/>
    <property type="evidence" value="ECO:0007669"/>
    <property type="project" value="EnsemblFungi"/>
</dbReference>
<dbReference type="GO" id="GO:0043171">
    <property type="term" value="P:peptide catabolic process"/>
    <property type="evidence" value="ECO:0000250"/>
    <property type="project" value="UniProtKB"/>
</dbReference>
<dbReference type="GO" id="GO:0030163">
    <property type="term" value="P:protein catabolic process"/>
    <property type="evidence" value="ECO:0007669"/>
    <property type="project" value="EnsemblFungi"/>
</dbReference>
<dbReference type="GO" id="GO:0006508">
    <property type="term" value="P:proteolysis"/>
    <property type="evidence" value="ECO:0007669"/>
    <property type="project" value="UniProtKB-KW"/>
</dbReference>
<dbReference type="CDD" id="cd09599">
    <property type="entry name" value="M1_LTA4H"/>
    <property type="match status" value="1"/>
</dbReference>
<dbReference type="FunFam" id="1.10.390.10:FF:000009">
    <property type="entry name" value="Leukotriene A(4) hydrolase"/>
    <property type="match status" value="1"/>
</dbReference>
<dbReference type="FunFam" id="1.25.40.320:FF:000001">
    <property type="entry name" value="Leukotriene A(4) hydrolase"/>
    <property type="match status" value="1"/>
</dbReference>
<dbReference type="FunFam" id="2.60.40.1730:FF:000004">
    <property type="entry name" value="Leukotriene A(4) hydrolase"/>
    <property type="match status" value="1"/>
</dbReference>
<dbReference type="FunFam" id="3.30.2010.30:FF:000001">
    <property type="entry name" value="Leukotriene A(4) hydrolase"/>
    <property type="match status" value="1"/>
</dbReference>
<dbReference type="Gene3D" id="3.30.2010.30">
    <property type="match status" value="1"/>
</dbReference>
<dbReference type="Gene3D" id="1.10.390.10">
    <property type="entry name" value="Neutral Protease Domain 2"/>
    <property type="match status" value="1"/>
</dbReference>
<dbReference type="Gene3D" id="1.25.40.320">
    <property type="entry name" value="Peptidase M1, leukotriene A4 hydrolase/aminopeptidase C-terminal domain"/>
    <property type="match status" value="1"/>
</dbReference>
<dbReference type="Gene3D" id="2.60.40.1730">
    <property type="entry name" value="tricorn interacting facor f3 domain"/>
    <property type="match status" value="1"/>
</dbReference>
<dbReference type="InterPro" id="IPR045357">
    <property type="entry name" value="Aminopeptidase_N-like_N"/>
</dbReference>
<dbReference type="InterPro" id="IPR042097">
    <property type="entry name" value="Aminopeptidase_N-like_N_sf"/>
</dbReference>
<dbReference type="InterPro" id="IPR016024">
    <property type="entry name" value="ARM-type_fold"/>
</dbReference>
<dbReference type="InterPro" id="IPR012777">
    <property type="entry name" value="LTA4H"/>
</dbReference>
<dbReference type="InterPro" id="IPR049980">
    <property type="entry name" value="LTA4H_cat"/>
</dbReference>
<dbReference type="InterPro" id="IPR038502">
    <property type="entry name" value="M1_LTA-4_hydro/amino_C_sf"/>
</dbReference>
<dbReference type="InterPro" id="IPR034015">
    <property type="entry name" value="M1_LTA4H"/>
</dbReference>
<dbReference type="InterPro" id="IPR001930">
    <property type="entry name" value="Peptidase_M1"/>
</dbReference>
<dbReference type="InterPro" id="IPR015211">
    <property type="entry name" value="Peptidase_M1_C"/>
</dbReference>
<dbReference type="InterPro" id="IPR014782">
    <property type="entry name" value="Peptidase_M1_dom"/>
</dbReference>
<dbReference type="InterPro" id="IPR027268">
    <property type="entry name" value="Peptidase_M4/M1_CTD_sf"/>
</dbReference>
<dbReference type="NCBIfam" id="TIGR02411">
    <property type="entry name" value="leuko_A4_hydro"/>
    <property type="match status" value="1"/>
</dbReference>
<dbReference type="PANTHER" id="PTHR45726">
    <property type="entry name" value="LEUKOTRIENE A-4 HYDROLASE"/>
    <property type="match status" value="1"/>
</dbReference>
<dbReference type="PANTHER" id="PTHR45726:SF3">
    <property type="entry name" value="LEUKOTRIENE A-4 HYDROLASE"/>
    <property type="match status" value="1"/>
</dbReference>
<dbReference type="Pfam" id="PF09127">
    <property type="entry name" value="Leuk-A4-hydro_C"/>
    <property type="match status" value="1"/>
</dbReference>
<dbReference type="Pfam" id="PF01433">
    <property type="entry name" value="Peptidase_M1"/>
    <property type="match status" value="1"/>
</dbReference>
<dbReference type="Pfam" id="PF17900">
    <property type="entry name" value="Peptidase_M1_N"/>
    <property type="match status" value="1"/>
</dbReference>
<dbReference type="PRINTS" id="PR00756">
    <property type="entry name" value="ALADIPTASE"/>
</dbReference>
<dbReference type="SMART" id="SM01263">
    <property type="entry name" value="Leuk-A4-hydro_C"/>
    <property type="match status" value="1"/>
</dbReference>
<dbReference type="SUPFAM" id="SSF48371">
    <property type="entry name" value="ARM repeat"/>
    <property type="match status" value="1"/>
</dbReference>
<dbReference type="SUPFAM" id="SSF63737">
    <property type="entry name" value="Leukotriene A4 hydrolase N-terminal domain"/>
    <property type="match status" value="1"/>
</dbReference>
<dbReference type="SUPFAM" id="SSF55486">
    <property type="entry name" value="Metalloproteases ('zincins'), catalytic domain"/>
    <property type="match status" value="1"/>
</dbReference>
<dbReference type="PROSITE" id="PS00142">
    <property type="entry name" value="ZINC_PROTEASE"/>
    <property type="match status" value="1"/>
</dbReference>
<protein>
    <recommendedName>
        <fullName>Leucine aminopeptidase 2</fullName>
        <ecNumber>3.4.11.-</ecNumber>
    </recommendedName>
    <alternativeName>
        <fullName>Epoxide hydrolase</fullName>
        <ecNumber>3.3.2.10</ecNumber>
    </alternativeName>
    <alternativeName>
        <fullName>Leukotriene A-4 hydrolase homolog</fullName>
        <shortName>LTA-4 hydrolase</shortName>
    </alternativeName>
</protein>
<comment type="function">
    <text evidence="2">Aminopeptidase that preferentially cleaves di- and tripeptides. Also has low epoxide hydrolase activity (in vitro). Can hydrolyze the epoxide leukotriene LTA(4) but it forms preferentially 5,6-dihydroxy-7,9,11,14-eicosatetraenoic acid rather than the cytokine leukotriene B(4) as the product compared to the homologous mammalian enzyme (in vitro).</text>
</comment>
<comment type="catalytic activity">
    <reaction evidence="2">
        <text>an epoxide + H2O = an ethanediol</text>
        <dbReference type="Rhea" id="RHEA:19037"/>
        <dbReference type="ChEBI" id="CHEBI:15377"/>
        <dbReference type="ChEBI" id="CHEBI:32955"/>
        <dbReference type="ChEBI" id="CHEBI:140594"/>
        <dbReference type="EC" id="3.3.2.10"/>
    </reaction>
</comment>
<comment type="cofactor">
    <cofactor evidence="2">
        <name>Zn(2+)</name>
        <dbReference type="ChEBI" id="CHEBI:29105"/>
    </cofactor>
    <text evidence="2">Binds 1 zinc ion per subunit.</text>
</comment>
<comment type="subcellular location">
    <subcellularLocation>
        <location evidence="2">Cytoplasm</location>
    </subcellularLocation>
    <subcellularLocation>
        <location evidence="2">Nucleus</location>
    </subcellularLocation>
</comment>
<comment type="similarity">
    <text evidence="4">Belongs to the peptidase M1 family.</text>
</comment>
<evidence type="ECO:0000250" key="1"/>
<evidence type="ECO:0000250" key="2">
    <source>
        <dbReference type="UniProtKB" id="Q10740"/>
    </source>
</evidence>
<evidence type="ECO:0000255" key="3">
    <source>
        <dbReference type="PROSITE-ProRule" id="PRU10095"/>
    </source>
</evidence>
<evidence type="ECO:0000305" key="4"/>
<accession>A7EJL9</accession>
<name>LKHA4_SCLS1</name>
<organism>
    <name type="scientific">Sclerotinia sclerotiorum (strain ATCC 18683 / 1980 / Ss-1)</name>
    <name type="common">White mold</name>
    <name type="synonym">Whetzelinia sclerotiorum</name>
    <dbReference type="NCBI Taxonomy" id="665079"/>
    <lineage>
        <taxon>Eukaryota</taxon>
        <taxon>Fungi</taxon>
        <taxon>Dikarya</taxon>
        <taxon>Ascomycota</taxon>
        <taxon>Pezizomycotina</taxon>
        <taxon>Leotiomycetes</taxon>
        <taxon>Helotiales</taxon>
        <taxon>Sclerotiniaceae</taxon>
        <taxon>Sclerotinia</taxon>
    </lineage>
</organism>
<reference key="1">
    <citation type="journal article" date="2011" name="PLoS Genet.">
        <title>Genomic analysis of the necrotrophic fungal pathogens Sclerotinia sclerotiorum and Botrytis cinerea.</title>
        <authorList>
            <person name="Amselem J."/>
            <person name="Cuomo C.A."/>
            <person name="van Kan J.A.L."/>
            <person name="Viaud M."/>
            <person name="Benito E.P."/>
            <person name="Couloux A."/>
            <person name="Coutinho P.M."/>
            <person name="de Vries R.P."/>
            <person name="Dyer P.S."/>
            <person name="Fillinger S."/>
            <person name="Fournier E."/>
            <person name="Gout L."/>
            <person name="Hahn M."/>
            <person name="Kohn L."/>
            <person name="Lapalu N."/>
            <person name="Plummer K.M."/>
            <person name="Pradier J.-M."/>
            <person name="Quevillon E."/>
            <person name="Sharon A."/>
            <person name="Simon A."/>
            <person name="ten Have A."/>
            <person name="Tudzynski B."/>
            <person name="Tudzynski P."/>
            <person name="Wincker P."/>
            <person name="Andrew M."/>
            <person name="Anthouard V."/>
            <person name="Beever R.E."/>
            <person name="Beffa R."/>
            <person name="Benoit I."/>
            <person name="Bouzid O."/>
            <person name="Brault B."/>
            <person name="Chen Z."/>
            <person name="Choquer M."/>
            <person name="Collemare J."/>
            <person name="Cotton P."/>
            <person name="Danchin E.G."/>
            <person name="Da Silva C."/>
            <person name="Gautier A."/>
            <person name="Giraud C."/>
            <person name="Giraud T."/>
            <person name="Gonzalez C."/>
            <person name="Grossetete S."/>
            <person name="Gueldener U."/>
            <person name="Henrissat B."/>
            <person name="Howlett B.J."/>
            <person name="Kodira C."/>
            <person name="Kretschmer M."/>
            <person name="Lappartient A."/>
            <person name="Leroch M."/>
            <person name="Levis C."/>
            <person name="Mauceli E."/>
            <person name="Neuveglise C."/>
            <person name="Oeser B."/>
            <person name="Pearson M."/>
            <person name="Poulain J."/>
            <person name="Poussereau N."/>
            <person name="Quesneville H."/>
            <person name="Rascle C."/>
            <person name="Schumacher J."/>
            <person name="Segurens B."/>
            <person name="Sexton A."/>
            <person name="Silva E."/>
            <person name="Sirven C."/>
            <person name="Soanes D.M."/>
            <person name="Talbot N.J."/>
            <person name="Templeton M."/>
            <person name="Yandava C."/>
            <person name="Yarden O."/>
            <person name="Zeng Q."/>
            <person name="Rollins J.A."/>
            <person name="Lebrun M.-H."/>
            <person name="Dickman M."/>
        </authorList>
    </citation>
    <scope>NUCLEOTIDE SEQUENCE [LARGE SCALE GENOMIC DNA]</scope>
    <source>
        <strain>ATCC 18683 / 1980 / Ss-1</strain>
    </source>
</reference>
<keyword id="KW-0963">Cytoplasm</keyword>
<keyword id="KW-0378">Hydrolase</keyword>
<keyword id="KW-0479">Metal-binding</keyword>
<keyword id="KW-0482">Metalloprotease</keyword>
<keyword id="KW-0539">Nucleus</keyword>
<keyword id="KW-0645">Protease</keyword>
<keyword id="KW-1185">Reference proteome</keyword>
<keyword id="KW-0862">Zinc</keyword>
<proteinExistence type="inferred from homology"/>
<sequence>MPRDPNTLSNYNNWRTKHTIADLAIDFKKQRVHGTVTLQLESITDKESEEIILDTSFVDVQKIAVDGSKTEEWVLKERNEPYGSPLSVKIPGGAAKGTIIALDITISTTDKCTALQWLTPAQTSNKKFPYMFSQCQAIHNRSIFPCQDTPDVKSTYDFRIRSPLPVLASGLPRGAASFVHGENGESGTLLYSFYQEIPMPSYLFALSSGDIATASIGSRSLVSTGPEELLGAKWELERDTEKFIETIEKIVYPYEWTQYNVLVLPPSFPYGGMENPVFTFATPTIISGDRENVDVIAHELAHSWSGNLVSNASWEHFWLNEGWTVYLERRIIAAVHGEAYRDFSSIIGWKALEDSVKLFGEDHEFTKLVVDLKGKDPDDAFSSVPYEKGFHFLYYLERLVGKPTWDKFIPHYFTTWKKKSLDSYEFKATLLDFFASDEAASKALESVDWDSWFYKPGLPPKPEFDTSLVDKCYALAKKWESKDFVPSPSDIEGWSANQVVVFLQQVQLFTTPLTPSQSQAMGKAYSLVDTQNVELSSRYFGVGLAAKDESVYLPTAELLGKVGRMKFVRTLYRKLLVVDRKLAEETFEKNKDFYHPICREQVEKDLKE</sequence>